<protein>
    <recommendedName>
        <fullName>Basic phospholipase A2 cannitoxin alpha chain</fullName>
        <shortName>svPLA2</shortName>
        <ecNumber>3.1.1.4</ecNumber>
    </recommendedName>
    <alternativeName>
        <fullName>Phosphatidylcholine 2-acylhydrolase</fullName>
    </alternativeName>
</protein>
<comment type="function">
    <text evidence="1 2">Heterotrimer: Snake venom phospholipase A2 (PLA2) heterotrimer that acts as a potent presynaptic neurotoxin by blocking synaptic transmission and synaptic vesicle recycling. Enzymatic activity is essential for the neurotoxic effects (PubMed:16135698). May act by binding in a calcium-dependent fashion to neurotonal pentraxin-1 (NPTX1) and neurotonal pentraxin-2 (NPTX2), but not to neuronal pentraxin receptor (NPTXR). Also binds to taipoxin-associated calcium binding protein 49 (RCN2), a protein localized in the lumen of endoplasmic reticulum (By similarity).</text>
</comment>
<comment type="function">
    <text evidence="2">Monomer (alpha chain): Snake venom phospholipase A2 (PLA2) that possesses a low level of presynaptic activity and the same high enzymatic activity than the heterotrimer. PLA2 catalyzes the calcium-dependent hydrolysis of the 2-acyl groups in 3-sn-phosphoglycerides.</text>
</comment>
<comment type="catalytic activity">
    <reaction evidence="2">
        <text>a 1,2-diacyl-sn-glycero-3-phosphocholine + H2O = a 1-acyl-sn-glycero-3-phosphocholine + a fatty acid + H(+)</text>
        <dbReference type="Rhea" id="RHEA:15801"/>
        <dbReference type="ChEBI" id="CHEBI:15377"/>
        <dbReference type="ChEBI" id="CHEBI:15378"/>
        <dbReference type="ChEBI" id="CHEBI:28868"/>
        <dbReference type="ChEBI" id="CHEBI:57643"/>
        <dbReference type="ChEBI" id="CHEBI:58168"/>
        <dbReference type="EC" id="3.1.1.4"/>
    </reaction>
</comment>
<comment type="cofactor">
    <cofactor evidence="1">
        <name>Ca(2+)</name>
        <dbReference type="ChEBI" id="CHEBI:29108"/>
    </cofactor>
    <text evidence="1">Binds 1 Ca(2+) ion.</text>
</comment>
<comment type="subunit">
    <text>Heterotrimer of alpha, beta, and gamma chains; non-covalently linked.</text>
</comment>
<comment type="subcellular location">
    <subcellularLocation>
        <location>Secreted</location>
    </subcellularLocation>
</comment>
<comment type="tissue specificity">
    <text>Expressed by the venom gland.</text>
</comment>
<comment type="mass spectrometry" mass="13824.0" method="MALDI" evidence="2"/>
<comment type="similarity">
    <text evidence="3">Belongs to the phospholipase A2 family. Group I subfamily. D49 sub-subfamily.</text>
</comment>
<evidence type="ECO:0000250" key="1"/>
<evidence type="ECO:0000269" key="2">
    <source>
    </source>
</evidence>
<evidence type="ECO:0000305" key="3"/>
<feature type="chain" id="PRO_0000420854" description="Basic phospholipase A2 cannitoxin alpha chain">
    <location>
        <begin position="1"/>
        <end position="20" status="greater than"/>
    </location>
</feature>
<feature type="disulfide bond">
    <location>
        <begin position="11"/>
        <end status="unknown"/>
    </location>
</feature>
<feature type="unsure residue" description="Assigned by comparison with orthologs">
    <location>
        <position position="20"/>
    </location>
</feature>
<feature type="non-terminal residue">
    <location>
        <position position="20"/>
    </location>
</feature>
<proteinExistence type="evidence at protein level"/>
<dbReference type="EC" id="3.1.1.4"/>
<dbReference type="GO" id="GO:0005576">
    <property type="term" value="C:extracellular region"/>
    <property type="evidence" value="ECO:0007669"/>
    <property type="project" value="UniProtKB-SubCell"/>
</dbReference>
<dbReference type="GO" id="GO:0046872">
    <property type="term" value="F:metal ion binding"/>
    <property type="evidence" value="ECO:0007669"/>
    <property type="project" value="UniProtKB-KW"/>
</dbReference>
<dbReference type="GO" id="GO:0004623">
    <property type="term" value="F:phospholipase A2 activity"/>
    <property type="evidence" value="ECO:0007669"/>
    <property type="project" value="UniProtKB-EC"/>
</dbReference>
<dbReference type="GO" id="GO:0090729">
    <property type="term" value="F:toxin activity"/>
    <property type="evidence" value="ECO:0007669"/>
    <property type="project" value="UniProtKB-KW"/>
</dbReference>
<dbReference type="GO" id="GO:0016042">
    <property type="term" value="P:lipid catabolic process"/>
    <property type="evidence" value="ECO:0007669"/>
    <property type="project" value="UniProtKB-KW"/>
</dbReference>
<organism>
    <name type="scientific">Oxyuranus scutellatus canni</name>
    <name type="common">Papuan taipan</name>
    <dbReference type="NCBI Taxonomy" id="183720"/>
    <lineage>
        <taxon>Eukaryota</taxon>
        <taxon>Metazoa</taxon>
        <taxon>Chordata</taxon>
        <taxon>Craniata</taxon>
        <taxon>Vertebrata</taxon>
        <taxon>Euteleostomi</taxon>
        <taxon>Lepidosauria</taxon>
        <taxon>Squamata</taxon>
        <taxon>Bifurcata</taxon>
        <taxon>Unidentata</taxon>
        <taxon>Episquamata</taxon>
        <taxon>Toxicofera</taxon>
        <taxon>Serpentes</taxon>
        <taxon>Colubroidea</taxon>
        <taxon>Elapidae</taxon>
        <taxon>Hydrophiinae</taxon>
        <taxon>Oxyuranus</taxon>
    </lineage>
</organism>
<reference key="1">
    <citation type="journal article" date="2005" name="J. Pharmacol. Exp. Ther.">
        <title>Isolation and pharmacological characterization of cannitoxin, a presynaptic neurotoxin from the venom of the Papuan Taipan (Oxyuranus scutellatus canni).</title>
        <authorList>
            <person name="Kuruppu S."/>
            <person name="Reeve S."/>
            <person name="Banerjee Y."/>
            <person name="Kini R.M."/>
            <person name="Smith A.I."/>
            <person name="Hodgson W.C."/>
        </authorList>
    </citation>
    <scope>PROTEIN SEQUENCE</scope>
    <scope>FUNCTION</scope>
    <scope>CATALYTIC ACTIVITY</scope>
    <scope>MASS SPECTROMETRY</scope>
    <source>
        <tissue>Venom</tissue>
    </source>
</reference>
<sequence length="20" mass="2382">NLLQFGYMIRCANGRSRPVW</sequence>
<name>PA2CA_OXYSA</name>
<accession>P0DKT7</accession>
<keyword id="KW-0106">Calcium</keyword>
<keyword id="KW-0903">Direct protein sequencing</keyword>
<keyword id="KW-1015">Disulfide bond</keyword>
<keyword id="KW-0378">Hydrolase</keyword>
<keyword id="KW-0442">Lipid degradation</keyword>
<keyword id="KW-0443">Lipid metabolism</keyword>
<keyword id="KW-0479">Metal-binding</keyword>
<keyword id="KW-0528">Neurotoxin</keyword>
<keyword id="KW-0638">Presynaptic neurotoxin</keyword>
<keyword id="KW-0964">Secreted</keyword>
<keyword id="KW-0800">Toxin</keyword>